<name>BECN1_YEAST</name>
<accession>Q02948</accession>
<accession>D6W3P7</accession>
<proteinExistence type="evidence at protein level"/>
<reference key="1">
    <citation type="journal article" date="1998" name="J. Biol. Chem.">
        <title>Apg14p and Apg6/Vps30p form a protein complex essential for autophagy in the yeast, Saccharomyces cerevisiae.</title>
        <authorList>
            <person name="Kametaka S."/>
            <person name="Okano T."/>
            <person name="Ohsumi M."/>
            <person name="Ohsumi Y."/>
        </authorList>
    </citation>
    <scope>NUCLEOTIDE SEQUENCE [GENOMIC DNA]</scope>
    <scope>FUNCTION</scope>
    <scope>SUBCELLULAR LOCATION</scope>
    <scope>INTERACTION WITH ATG14</scope>
</reference>
<reference key="2">
    <citation type="journal article" date="1997" name="Nature">
        <title>The nucleotide sequence of Saccharomyces cerevisiae chromosome XVI.</title>
        <authorList>
            <person name="Bussey H."/>
            <person name="Storms R.K."/>
            <person name="Ahmed A."/>
            <person name="Albermann K."/>
            <person name="Allen E."/>
            <person name="Ansorge W."/>
            <person name="Araujo R."/>
            <person name="Aparicio A."/>
            <person name="Barrell B.G."/>
            <person name="Badcock K."/>
            <person name="Benes V."/>
            <person name="Botstein D."/>
            <person name="Bowman S."/>
            <person name="Brueckner M."/>
            <person name="Carpenter J."/>
            <person name="Cherry J.M."/>
            <person name="Chung E."/>
            <person name="Churcher C.M."/>
            <person name="Coster F."/>
            <person name="Davis K."/>
            <person name="Davis R.W."/>
            <person name="Dietrich F.S."/>
            <person name="Delius H."/>
            <person name="DiPaolo T."/>
            <person name="Dubois E."/>
            <person name="Duesterhoeft A."/>
            <person name="Duncan M."/>
            <person name="Floeth M."/>
            <person name="Fortin N."/>
            <person name="Friesen J.D."/>
            <person name="Fritz C."/>
            <person name="Goffeau A."/>
            <person name="Hall J."/>
            <person name="Hebling U."/>
            <person name="Heumann K."/>
            <person name="Hilbert H."/>
            <person name="Hillier L.W."/>
            <person name="Hunicke-Smith S."/>
            <person name="Hyman R.W."/>
            <person name="Johnston M."/>
            <person name="Kalman S."/>
            <person name="Kleine K."/>
            <person name="Komp C."/>
            <person name="Kurdi O."/>
            <person name="Lashkari D."/>
            <person name="Lew H."/>
            <person name="Lin A."/>
            <person name="Lin D."/>
            <person name="Louis E.J."/>
            <person name="Marathe R."/>
            <person name="Messenguy F."/>
            <person name="Mewes H.-W."/>
            <person name="Mirtipati S."/>
            <person name="Moestl D."/>
            <person name="Mueller-Auer S."/>
            <person name="Namath A."/>
            <person name="Nentwich U."/>
            <person name="Oefner P."/>
            <person name="Pearson D."/>
            <person name="Petel F.X."/>
            <person name="Pohl T.M."/>
            <person name="Purnelle B."/>
            <person name="Rajandream M.A."/>
            <person name="Rechmann S."/>
            <person name="Rieger M."/>
            <person name="Riles L."/>
            <person name="Roberts D."/>
            <person name="Schaefer M."/>
            <person name="Scharfe M."/>
            <person name="Scherens B."/>
            <person name="Schramm S."/>
            <person name="Schroeder M."/>
            <person name="Sdicu A.-M."/>
            <person name="Tettelin H."/>
            <person name="Urrestarazu L.A."/>
            <person name="Ushinsky S."/>
            <person name="Vierendeels F."/>
            <person name="Vissers S."/>
            <person name="Voss H."/>
            <person name="Walsh S.V."/>
            <person name="Wambutt R."/>
            <person name="Wang Y."/>
            <person name="Wedler E."/>
            <person name="Wedler H."/>
            <person name="Winnett E."/>
            <person name="Zhong W.-W."/>
            <person name="Zollner A."/>
            <person name="Vo D.H."/>
            <person name="Hani J."/>
        </authorList>
    </citation>
    <scope>NUCLEOTIDE SEQUENCE [LARGE SCALE GENOMIC DNA]</scope>
    <source>
        <strain>ATCC 204508 / S288c</strain>
    </source>
</reference>
<reference key="3">
    <citation type="journal article" date="2014" name="G3 (Bethesda)">
        <title>The reference genome sequence of Saccharomyces cerevisiae: Then and now.</title>
        <authorList>
            <person name="Engel S.R."/>
            <person name="Dietrich F.S."/>
            <person name="Fisk D.G."/>
            <person name="Binkley G."/>
            <person name="Balakrishnan R."/>
            <person name="Costanzo M.C."/>
            <person name="Dwight S.S."/>
            <person name="Hitz B.C."/>
            <person name="Karra K."/>
            <person name="Nash R.S."/>
            <person name="Weng S."/>
            <person name="Wong E.D."/>
            <person name="Lloyd P."/>
            <person name="Skrzypek M.S."/>
            <person name="Miyasato S.R."/>
            <person name="Simison M."/>
            <person name="Cherry J.M."/>
        </authorList>
    </citation>
    <scope>GENOME REANNOTATION</scope>
    <source>
        <strain>ATCC 204508 / S288c</strain>
    </source>
</reference>
<reference key="4">
    <citation type="journal article" date="1993" name="FEBS Lett.">
        <title>Isolation and characterization of autophagy-defective mutants of Saccharomyces cerevisiae.</title>
        <authorList>
            <person name="Tsukada M."/>
            <person name="Ohsumi Y."/>
        </authorList>
    </citation>
    <scope>FUNCTION</scope>
</reference>
<reference key="5">
    <citation type="journal article" date="1997" name="J. Cell Biol.">
        <title>Endosome to Golgi retrieval of the vacuolar protein sorting receptor, Vps10p, requires the function of the VPS29, VPS30, and VPS35 gene products.</title>
        <authorList>
            <person name="Seaman M.N.J."/>
            <person name="Marcusson E.G."/>
            <person name="Cereghino J.L."/>
            <person name="Emr S.D."/>
        </authorList>
    </citation>
    <scope>FUNCTION</scope>
    <scope>SUBCELLULAR LOCATION</scope>
</reference>
<reference key="6">
    <citation type="journal article" date="2001" name="EMBO J.">
        <title>The pre-autophagosomal structure organized by concerted functions of APG genes is essential for autophagosome formation.</title>
        <authorList>
            <person name="Suzuki K."/>
            <person name="Kirisako T."/>
            <person name="Kamada Y."/>
            <person name="Mizushima N."/>
            <person name="Noda T."/>
            <person name="Ohsumi Y."/>
        </authorList>
    </citation>
    <scope>FUNCTION</scope>
</reference>
<reference key="7">
    <citation type="journal article" date="2001" name="J. Cell Biol.">
        <title>Two distinct Vps34 phosphatidylinositol 3-kinase complexes function in autophagy and carboxypeptidase Y sorting in Saccharomyces cerevisiae.</title>
        <authorList>
            <person name="Kihara A."/>
            <person name="Noda T."/>
            <person name="Ishihara N."/>
            <person name="Ohsumi Y."/>
        </authorList>
    </citation>
    <scope>FUNCTION</scope>
    <scope>SUBCELLULAR LOCATION</scope>
    <scope>INTERACTION WITH VPS15; VPS34; VPS38 AND ATG14</scope>
</reference>
<reference key="8">
    <citation type="journal article" date="2002" name="J. Cell Sci.">
        <title>Retromer function in endosome-to-Golgi retrograde transport is regulated by the yeast Vps34 PtdIns 3-kinase.</title>
        <authorList>
            <person name="Burda P."/>
            <person name="Padilla S.M."/>
            <person name="Sarkar S."/>
            <person name="Emr S.D."/>
        </authorList>
    </citation>
    <scope>FUNCTION</scope>
</reference>
<reference key="9">
    <citation type="journal article" date="2003" name="Nature">
        <title>Global analysis of protein localization in budding yeast.</title>
        <authorList>
            <person name="Huh W.-K."/>
            <person name="Falvo J.V."/>
            <person name="Gerke L.C."/>
            <person name="Carroll A.S."/>
            <person name="Howson R.W."/>
            <person name="Weissman J.S."/>
            <person name="O'Shea E.K."/>
        </authorList>
    </citation>
    <scope>SUBCELLULAR LOCATION [LARGE SCALE ANALYSIS]</scope>
</reference>
<reference key="10">
    <citation type="journal article" date="2003" name="Nature">
        <title>Global analysis of protein expression in yeast.</title>
        <authorList>
            <person name="Ghaemmaghami S."/>
            <person name="Huh W.-K."/>
            <person name="Bower K."/>
            <person name="Howson R.W."/>
            <person name="Belle A."/>
            <person name="Dephoure N."/>
            <person name="O'Shea E.K."/>
            <person name="Weissman J.S."/>
        </authorList>
    </citation>
    <scope>LEVEL OF PROTEIN EXPRESSION [LARGE SCALE ANALYSIS]</scope>
</reference>
<reference key="11">
    <citation type="journal article" date="2006" name="Mol. Biol. Cell">
        <title>Characterization of an ERAD gene as VPS30/ATG6 reveals two alternative and functionally distinct protein quality control pathways: one for soluble Z variant of human alpha-1 proteinase inhibitor (A1PiZ) and another for aggregates of A1PiZ.</title>
        <authorList>
            <person name="Kruse K.B."/>
            <person name="Brodsky J.L."/>
            <person name="McCracken A.A."/>
        </authorList>
    </citation>
    <scope>FUNCTION</scope>
</reference>
<reference key="12">
    <citation type="journal article" date="2007" name="Autophagy">
        <title>Overexpression of autophagy-related genes inhibits yeast filamentous growth.</title>
        <authorList>
            <person name="Ma J."/>
            <person name="Jin R."/>
            <person name="Dobry C.J."/>
            <person name="Lawson S.K."/>
            <person name="Kumar A."/>
        </authorList>
    </citation>
    <scope>FUNCTION</scope>
</reference>
<reference key="13">
    <citation type="journal article" date="2007" name="Genes Cells">
        <title>Hierarchy of Atg proteins in pre-autophagosomal structure organization.</title>
        <authorList>
            <person name="Suzuki K."/>
            <person name="Kubota Y."/>
            <person name="Sekito T."/>
            <person name="Ohsumi Y."/>
        </authorList>
    </citation>
    <scope>SUBCELLULAR LOCATION</scope>
</reference>
<reference key="14">
    <citation type="journal article" date="2006" name="Mol. Biol. Cell">
        <title>Assortment of phosphatidylinositol 3-kinase complexes--Atg14p directs association of complex I to the pre-autophagosomal structure in Saccharomyces cerevisiae.</title>
        <authorList>
            <person name="Obara K."/>
            <person name="Sekito T."/>
            <person name="Ohsumi Y."/>
        </authorList>
    </citation>
    <scope>INTERACTION WITH ATG14</scope>
    <scope>SUBCELLULAR LOCATION</scope>
</reference>
<reference key="15">
    <citation type="journal article" date="2007" name="Autophagy">
        <title>The role of autophagy in mitochondria maintenance: characterization of mitochondrial functions in autophagy-deficient S. cerevisiae strains.</title>
        <authorList>
            <person name="Zhang Y."/>
            <person name="Qi H."/>
            <person name="Taylor R."/>
            <person name="Xu W."/>
            <person name="Liu L.F."/>
            <person name="Jin S."/>
        </authorList>
    </citation>
    <scope>FUNCTION</scope>
</reference>
<reference key="16">
    <citation type="journal article" date="2008" name="J. Biochem.">
        <title>O-mannosylation is required for degradation of the endoplasmic reticulum-associated degradation substrate Gas1*p via the ubiquitin/proteasome pathway in Saccharomyces cerevisiae.</title>
        <authorList>
            <person name="Hirayama H."/>
            <person name="Fujita M."/>
            <person name="Yoko-o T."/>
            <person name="Jigami Y."/>
        </authorList>
    </citation>
    <scope>FUNCTION OF THE VPS34 PI3-KINASE COMPLEX II</scope>
</reference>
<reference key="17">
    <citation type="journal article" date="2008" name="Mol. Biol. Cell">
        <title>Piecemeal microautophagy of the nucleus requires the core macroautophagy genes.</title>
        <authorList>
            <person name="Krick R."/>
            <person name="Muehe Y."/>
            <person name="Prick T."/>
            <person name="Bremer S."/>
            <person name="Schlotterhose P."/>
            <person name="Eskelinen E.L."/>
            <person name="Millen J."/>
            <person name="Goldfarb D.S."/>
            <person name="Thumm M."/>
        </authorList>
    </citation>
    <scope>FUNCTION</scope>
</reference>
<reference key="18">
    <citation type="journal article" date="2008" name="Mol. Cell. Proteomics">
        <title>A multidimensional chromatography technology for in-depth phosphoproteome analysis.</title>
        <authorList>
            <person name="Albuquerque C.P."/>
            <person name="Smolka M.B."/>
            <person name="Payne S.H."/>
            <person name="Bafna V."/>
            <person name="Eng J."/>
            <person name="Zhou H."/>
        </authorList>
    </citation>
    <scope>PHOSPHORYLATION [LARGE SCALE ANALYSIS] AT THR-142</scope>
    <scope>IDENTIFICATION BY MASS SPECTROMETRY [LARGE SCALE ANALYSIS]</scope>
</reference>
<reference key="19">
    <citation type="journal article" date="2009" name="Eur. J. Cell Biol.">
        <title>ER-associated complexes (ERACs) containing aggregated cystic fibrosis transmembrane conductance regulator (CFTR) are degraded by autophagy.</title>
        <authorList>
            <person name="Fu L."/>
            <person name="Sztul E."/>
        </authorList>
    </citation>
    <scope>FUNCTION</scope>
</reference>
<reference key="20">
    <citation type="journal article" date="2009" name="Mol. Cell. Proteomics">
        <title>The yeast vacuolar membrane proteome.</title>
        <authorList>
            <person name="Wiederhold E."/>
            <person name="Gandhi T."/>
            <person name="Permentier H.P."/>
            <person name="Breitling R."/>
            <person name="Poolman B."/>
            <person name="Slotboom D.J."/>
        </authorList>
    </citation>
    <scope>IDENTIFICATION BY MASS SPECTROMETRY</scope>
    <scope>SUBCELLULAR LOCATION</scope>
</reference>
<reference key="21">
    <citation type="journal article" date="2009" name="Science">
        <title>Global analysis of Cdk1 substrate phosphorylation sites provides insights into evolution.</title>
        <authorList>
            <person name="Holt L.J."/>
            <person name="Tuch B.B."/>
            <person name="Villen J."/>
            <person name="Johnson A.D."/>
            <person name="Gygi S.P."/>
            <person name="Morgan D.O."/>
        </authorList>
    </citation>
    <scope>PHOSPHORYLATION [LARGE SCALE ANALYSIS] AT THR-142</scope>
    <scope>IDENTIFICATION BY MASS SPECTROMETRY [LARGE SCALE ANALYSIS]</scope>
</reference>
<reference key="22">
    <citation type="journal article" date="2013" name="J. Cell Biol.">
        <title>Atg38 is required for autophagy-specific phosphatidylinositol 3-kinase complex integrity.</title>
        <authorList>
            <person name="Araki Y."/>
            <person name="Ku W.C."/>
            <person name="Akioka M."/>
            <person name="May A.I."/>
            <person name="Hayashi Y."/>
            <person name="Arisaka F."/>
            <person name="Ishihama Y."/>
            <person name="Ohsumi Y."/>
        </authorList>
    </citation>
    <scope>IDENTIFICATION BY MASS SPECTROMETRY</scope>
    <scope>IDENTIFICATION IN THE AUTOPHAGY-SPECIFIC VPS34 PI3-KINASE COMPLEX I</scope>
</reference>
<reference key="23">
    <citation type="journal article" date="2013" name="J. Cell Sci.">
        <title>Fine mapping of autophagy-related proteins during autophagosome formation in Saccharomyces cerevisiae.</title>
        <authorList>
            <person name="Suzuki K."/>
            <person name="Akioka M."/>
            <person name="Kondo-Kakuta C."/>
            <person name="Yamamoto H."/>
            <person name="Ohsumi Y."/>
        </authorList>
    </citation>
    <scope>SUBCELLULAR LOCATION</scope>
</reference>
<reference key="24">
    <citation type="journal article" date="2013" name="Mol. Cell. Biol.">
        <title>Role of membrane association and Atg14-dependent phosphorylation in beclin-1-mediated autophagy.</title>
        <authorList>
            <person name="Fogel A.I."/>
            <person name="Dlouhy B.J."/>
            <person name="Wang C."/>
            <person name="Ryu S.W."/>
            <person name="Neutzner A."/>
            <person name="Hasson S.A."/>
            <person name="Sideris D.P."/>
            <person name="Abeliovich H."/>
            <person name="Youle R.J."/>
        </authorList>
    </citation>
    <scope>FUNCTION</scope>
    <scope>SUBCELLULAR LOCATION</scope>
    <scope>MEMBRANE-SPANNING REGION</scope>
</reference>
<reference key="25">
    <citation type="journal article" date="2012" name="J. Biol. Chem.">
        <title>Structure of the novel C-terminal domain of vacuolar protein sorting 30/autophagy-related protein 6 and its specific role in autophagy.</title>
        <authorList>
            <person name="Noda N.N."/>
            <person name="Kobayashi T."/>
            <person name="Adachi W."/>
            <person name="Fujioka Y."/>
            <person name="Ohsumi Y."/>
            <person name="Inagaki F."/>
        </authorList>
    </citation>
    <scope>X-RAY CRYSTALLOGRAPHY (2.3 ANGSTROMS) OF 320-539</scope>
    <scope>DOMAIN</scope>
    <scope>FUNCTION</scope>
</reference>
<reference evidence="23" key="26">
    <citation type="journal article" date="2015" name="Science">
        <title>Structure and flexibility of the endosomal Vps34 complex reveals the basis of its function on membranes.</title>
        <authorList>
            <person name="Rostislavleva K."/>
            <person name="Soler N."/>
            <person name="Ohashi Y."/>
            <person name="Zhang L."/>
            <person name="Pardon E."/>
            <person name="Burke J.E."/>
            <person name="Masson G.R."/>
            <person name="Johnson C."/>
            <person name="Steyaert J."/>
            <person name="Ktistakis N.T."/>
            <person name="Williams R.L."/>
        </authorList>
    </citation>
    <scope>X-RAY CRYSTALLOGRAPHY (4.40 ANGSTROMS) WITHIN THE VPS34 PI3-KINASE COMPLEX II</scope>
    <scope>SUBUNIT</scope>
</reference>
<gene>
    <name evidence="21" type="primary">VPS30</name>
    <name evidence="20" type="synonym">APG6</name>
    <name evidence="21" type="synonym">ATG6</name>
    <name type="synonym">VPT30</name>
    <name type="ordered locus">YPL120W</name>
    <name type="ORF">LPH7</name>
</gene>
<feature type="chain" id="PRO_0000218559" description="Vacuolar protein sorting-associated protein 30">
    <location>
        <begin position="1"/>
        <end position="557"/>
    </location>
</feature>
<feature type="region of interest" description="Disordered" evidence="2">
    <location>
        <begin position="93"/>
        <end position="149"/>
    </location>
</feature>
<feature type="region of interest" description="Disordered" evidence="2">
    <location>
        <begin position="218"/>
        <end position="238"/>
    </location>
</feature>
<feature type="region of interest" description="BARA" evidence="13">
    <location>
        <begin position="320"/>
        <end position="539"/>
    </location>
</feature>
<feature type="region of interest" description="Required for membrane-association, autophagic function during starvation and normal autophagosome morphology" evidence="14">
    <location>
        <begin position="515"/>
        <end position="540"/>
    </location>
</feature>
<feature type="coiled-coil region" evidence="1">
    <location>
        <begin position="189"/>
        <end position="322"/>
    </location>
</feature>
<feature type="compositionally biased region" description="Acidic residues" evidence="2">
    <location>
        <begin position="135"/>
        <end position="147"/>
    </location>
</feature>
<feature type="modified residue" description="Phosphothreonine" evidence="24 25">
    <location>
        <position position="142"/>
    </location>
</feature>
<feature type="turn" evidence="26">
    <location>
        <begin position="322"/>
        <end position="326"/>
    </location>
</feature>
<feature type="strand" evidence="26">
    <location>
        <begin position="329"/>
        <end position="332"/>
    </location>
</feature>
<feature type="strand" evidence="26">
    <location>
        <begin position="335"/>
        <end position="338"/>
    </location>
</feature>
<feature type="strand" evidence="26">
    <location>
        <begin position="341"/>
        <end position="343"/>
    </location>
</feature>
<feature type="helix" evidence="26">
    <location>
        <begin position="353"/>
        <end position="373"/>
    </location>
</feature>
<feature type="strand" evidence="26">
    <location>
        <begin position="379"/>
        <end position="384"/>
    </location>
</feature>
<feature type="helix" evidence="26">
    <location>
        <begin position="387"/>
        <end position="389"/>
    </location>
</feature>
<feature type="strand" evidence="26">
    <location>
        <begin position="391"/>
        <end position="395"/>
    </location>
</feature>
<feature type="strand" evidence="26">
    <location>
        <begin position="413"/>
        <end position="419"/>
    </location>
</feature>
<feature type="helix" evidence="26">
    <location>
        <begin position="435"/>
        <end position="459"/>
    </location>
</feature>
<feature type="strand" evidence="26">
    <location>
        <begin position="502"/>
        <end position="504"/>
    </location>
</feature>
<feature type="helix" evidence="26">
    <location>
        <begin position="513"/>
        <end position="537"/>
    </location>
</feature>
<evidence type="ECO:0000255" key="1"/>
<evidence type="ECO:0000256" key="2">
    <source>
        <dbReference type="SAM" id="MobiDB-lite"/>
    </source>
</evidence>
<evidence type="ECO:0000269" key="3">
    <source>
    </source>
</evidence>
<evidence type="ECO:0000269" key="4">
    <source>
    </source>
</evidence>
<evidence type="ECO:0000269" key="5">
    <source>
    </source>
</evidence>
<evidence type="ECO:0000269" key="6">
    <source>
    </source>
</evidence>
<evidence type="ECO:0000269" key="7">
    <source>
    </source>
</evidence>
<evidence type="ECO:0000269" key="8">
    <source>
    </source>
</evidence>
<evidence type="ECO:0000269" key="9">
    <source>
    </source>
</evidence>
<evidence type="ECO:0000269" key="10">
    <source>
    </source>
</evidence>
<evidence type="ECO:0000269" key="11">
    <source>
    </source>
</evidence>
<evidence type="ECO:0000269" key="12">
    <source>
    </source>
</evidence>
<evidence type="ECO:0000269" key="13">
    <source>
    </source>
</evidence>
<evidence type="ECO:0000269" key="14">
    <source>
    </source>
</evidence>
<evidence type="ECO:0000269" key="15">
    <source>
    </source>
</evidence>
<evidence type="ECO:0000269" key="16">
    <source>
    </source>
</evidence>
<evidence type="ECO:0000269" key="17">
    <source>
    </source>
</evidence>
<evidence type="ECO:0000269" key="18">
    <source>
    </source>
</evidence>
<evidence type="ECO:0000269" key="19">
    <source>
    </source>
</evidence>
<evidence type="ECO:0000303" key="20">
    <source>
    </source>
</evidence>
<evidence type="ECO:0000303" key="21">
    <source>
    </source>
</evidence>
<evidence type="ECO:0000305" key="22"/>
<evidence type="ECO:0007744" key="23">
    <source>
        <dbReference type="PDB" id="5DFZ"/>
    </source>
</evidence>
<evidence type="ECO:0007744" key="24">
    <source>
    </source>
</evidence>
<evidence type="ECO:0007744" key="25">
    <source>
    </source>
</evidence>
<evidence type="ECO:0007829" key="26">
    <source>
        <dbReference type="PDB" id="3VP7"/>
    </source>
</evidence>
<sequence length="557" mass="63261">MKCQTCHLPLQLDPSLEGLSLTQRNLLLSNNSIITATNENVISNKGIEAADNCGPQIPKERLRRLGEIQNIKDLNLKDDKLITDSFVFLNHDDDDNANITSNSREDQRYGNANGNDNKKANSDTSDGTSTFRDHDEEEQEATDEDENQQIQLNSKTLSTQVNAMTNVFNILSSQTNIDFPICQDCCNILINRLKSEYDDAIKERDTYAQFLSKLESQNKEISESNKEKQYSHNLSEKENLKKEEERLLDQLLRLEMTDDDLDGELVRLQEKKVQLENEKLQKLSDQNLMDLNNIQFNKNLQSLKLQYELSLNQLDKLRKINIFNATFKISHSGPFATINGLRLGSIPESVVPWKEINAALGQLILLLATINKNLKINLVDYELQPMGSFSKIKKRMVNSVEYNNSTTNAPGDWLILPVYYDENFNLGRIFRKETKFDKSLETTLEIISEITRQLSTIASSYSSQTLTTSQDESSMNNANDVENSTSILELPYIMNKDKINGLSVKLHGSSPNLEWTTAMKFLLTNVKWLLAFSSNLLSKSITLSPTVNYNDKTISGN</sequence>
<protein>
    <recommendedName>
        <fullName evidence="21">Vacuolar protein sorting-associated protein 30</fullName>
    </recommendedName>
    <alternativeName>
        <fullName evidence="21">Autophagy-related protein 6</fullName>
    </alternativeName>
</protein>
<keyword id="KW-0002">3D-structure</keyword>
<keyword id="KW-0072">Autophagy</keyword>
<keyword id="KW-0175">Coiled coil</keyword>
<keyword id="KW-0967">Endosome</keyword>
<keyword id="KW-0472">Membrane</keyword>
<keyword id="KW-0597">Phosphoprotein</keyword>
<keyword id="KW-0653">Protein transport</keyword>
<keyword id="KW-1185">Reference proteome</keyword>
<keyword id="KW-0813">Transport</keyword>
<keyword id="KW-0926">Vacuole</keyword>
<comment type="function">
    <text evidence="3 4 5 7 8 9 10 11 12 13 14 17 18 19">Required for cytoplasm to vacuole transport (Cvt), autophagy, nucleophagy, and mitophagy, as a part of the autophagy-specific VPS34 PI3-kinase complex I (PubMed:11157979, PubMed:11689437, PubMed:16267277, PubMed:17404498, PubMed:18701704, PubMed:19131141, PubMed:22437838, PubMed:23878393, PubMed:8224160, PubMed:9712845). This complex is essential to recruit the ATG8-phosphatidylinositol conjugate and the ATG12-ATG5 conjugate to the pre-autophagosomal structure (PubMed:11157979, PubMed:11689437, PubMed:16267277, PubMed:17404498, PubMed:18701704, PubMed:19131141, PubMed:22437838, PubMed:23878393, PubMed:8224160, PubMed:9712845). Also involved in endosome-to-Golgi retrograde transport as part of the VPS34 PI3-kinase complex II (PubMed:11157979, PubMed:12244127, PubMed:18182384, PubMed:9105038). This second complex is required for the endosome-to-Golgi retrieval of PEP1 and KEX2, and the recruitment of VPS5 and VPS7, two components of the retromer complex, to endosomal membranes (probably through the synthesis of a specific pool of phosphatidylinositol 3-phosphate recruiting the retromer to the endosomes) (PubMed:11157979, PubMed:12244127, PubMed:18182384, PubMed:9105038). Also plays a role in regulation of filamentous growth (PubMed:17700056).</text>
</comment>
<comment type="subunit">
    <text evidence="15 16">Component of the autophagy-specific VPS34 PI3-kinase complex I composed of VPS15, VPS30, VPS34, ATG14 and ATG38; and of the VPS34 PI3-kinase complex II composed of VPS15, VPS30, VPS34 and VPS38.</text>
</comment>
<comment type="interaction">
    <interactant intactId="EBI-2670">
        <id>Q02948</id>
    </interactant>
    <interactant intactId="EBI-2699">
        <id>P38270</id>
        <label>ATG14</label>
    </interactant>
    <organismsDiffer>false</organismsDiffer>
    <experiments>12</experiments>
</comment>
<comment type="interaction">
    <interactant intactId="EBI-2670">
        <id>Q02948</id>
    </interactant>
    <interactant intactId="EBI-29972">
        <id>Q05919</id>
        <label>VPS38</label>
    </interactant>
    <organismsDiffer>false</organismsDiffer>
    <experiments>16</experiments>
</comment>
<comment type="subcellular location">
    <subcellularLocation>
        <location>Endosome membrane</location>
        <topology>Peripheral membrane protein</topology>
    </subcellularLocation>
    <subcellularLocation>
        <location>Vacuole membrane</location>
        <topology>Peripheral membrane protein</topology>
    </subcellularLocation>
    <subcellularLocation>
        <location evidence="14">Preautophagosomal structure membrane</location>
        <topology>Peripheral membrane protein</topology>
    </subcellularLocation>
    <text>With the VPS34 PI3-kinase complex I, localizes to the vacuole-isolation membrane contact site (VICS) during isolation membrane (IM) expansion. The IM is a membrane sac generated from the pre-autophagosomal structure that ultimately expands to become a mature autophagosome.</text>
</comment>
<comment type="domain">
    <text evidence="13">The C-terminal domain called the BARA domain is dispensable for the construction of both VPS34 PI3-kinase complexes, but is specifically required for autophagy through the targeting of complex I to the pre-autophagosomal structure.</text>
</comment>
<comment type="miscellaneous">
    <text evidence="6">Present with 2490 molecules/cell in log phase SD medium.</text>
</comment>
<comment type="similarity">
    <text evidence="22">Belongs to the beclin family.</text>
</comment>
<organism>
    <name type="scientific">Saccharomyces cerevisiae (strain ATCC 204508 / S288c)</name>
    <name type="common">Baker's yeast</name>
    <dbReference type="NCBI Taxonomy" id="559292"/>
    <lineage>
        <taxon>Eukaryota</taxon>
        <taxon>Fungi</taxon>
        <taxon>Dikarya</taxon>
        <taxon>Ascomycota</taxon>
        <taxon>Saccharomycotina</taxon>
        <taxon>Saccharomycetes</taxon>
        <taxon>Saccharomycetales</taxon>
        <taxon>Saccharomycetaceae</taxon>
        <taxon>Saccharomyces</taxon>
    </lineage>
</organism>
<dbReference type="EMBL" id="AB011072">
    <property type="protein sequence ID" value="BAA32104.1"/>
    <property type="molecule type" value="Genomic_DNA"/>
</dbReference>
<dbReference type="EMBL" id="U43503">
    <property type="protein sequence ID" value="AAB68242.1"/>
    <property type="molecule type" value="Genomic_DNA"/>
</dbReference>
<dbReference type="EMBL" id="BK006949">
    <property type="protein sequence ID" value="DAA11313.1"/>
    <property type="molecule type" value="Genomic_DNA"/>
</dbReference>
<dbReference type="PIR" id="S62002">
    <property type="entry name" value="S62002"/>
</dbReference>
<dbReference type="RefSeq" id="NP_015205.1">
    <property type="nucleotide sequence ID" value="NM_001183934.1"/>
</dbReference>
<dbReference type="PDB" id="3VP7">
    <property type="method" value="X-ray"/>
    <property type="resolution" value="2.30 A"/>
    <property type="chains" value="A=320-539"/>
</dbReference>
<dbReference type="PDB" id="5DFZ">
    <property type="method" value="X-ray"/>
    <property type="resolution" value="4.40 A"/>
    <property type="chains" value="D=1-557"/>
</dbReference>
<dbReference type="PDBsum" id="3VP7"/>
<dbReference type="PDBsum" id="5DFZ"/>
<dbReference type="SMR" id="Q02948"/>
<dbReference type="BioGRID" id="36061">
    <property type="interactions" value="502"/>
</dbReference>
<dbReference type="ComplexPortal" id="CPX-1677">
    <property type="entry name" value="Phosphatidylinositol 3-kinase complex II"/>
</dbReference>
<dbReference type="ComplexPortal" id="CPX-1881">
    <property type="entry name" value="Phosphatidylinositol 3-kinase complex, class III, type I"/>
</dbReference>
<dbReference type="DIP" id="DIP-2961N"/>
<dbReference type="FunCoup" id="Q02948">
    <property type="interactions" value="622"/>
</dbReference>
<dbReference type="IntAct" id="Q02948">
    <property type="interactions" value="12"/>
</dbReference>
<dbReference type="MINT" id="Q02948"/>
<dbReference type="STRING" id="4932.YPL120W"/>
<dbReference type="iPTMnet" id="Q02948"/>
<dbReference type="PaxDb" id="4932-YPL120W"/>
<dbReference type="PeptideAtlas" id="Q02948"/>
<dbReference type="EnsemblFungi" id="YPL120W_mRNA">
    <property type="protein sequence ID" value="YPL120W"/>
    <property type="gene ID" value="YPL120W"/>
</dbReference>
<dbReference type="GeneID" id="855983"/>
<dbReference type="KEGG" id="sce:YPL120W"/>
<dbReference type="AGR" id="SGD:S000006041"/>
<dbReference type="SGD" id="S000006041">
    <property type="gene designation" value="VPS30"/>
</dbReference>
<dbReference type="VEuPathDB" id="FungiDB:YPL120W"/>
<dbReference type="eggNOG" id="KOG2751">
    <property type="taxonomic scope" value="Eukaryota"/>
</dbReference>
<dbReference type="GeneTree" id="ENSGT00390000008164"/>
<dbReference type="HOGENOM" id="CLU_024219_3_2_1"/>
<dbReference type="InParanoid" id="Q02948"/>
<dbReference type="OMA" id="EWDVYKA"/>
<dbReference type="OrthoDB" id="20368at2759"/>
<dbReference type="BioCyc" id="YEAST:G3O-34019-MONOMER"/>
<dbReference type="Reactome" id="R-SCE-1632852">
    <property type="pathway name" value="Macroautophagy"/>
</dbReference>
<dbReference type="BioGRID-ORCS" id="855983">
    <property type="hits" value="5 hits in 10 CRISPR screens"/>
</dbReference>
<dbReference type="EvolutionaryTrace" id="Q02948"/>
<dbReference type="PRO" id="PR:Q02948"/>
<dbReference type="Proteomes" id="UP000002311">
    <property type="component" value="Chromosome XVI"/>
</dbReference>
<dbReference type="RNAct" id="Q02948">
    <property type="molecule type" value="protein"/>
</dbReference>
<dbReference type="GO" id="GO:0005737">
    <property type="term" value="C:cytoplasm"/>
    <property type="evidence" value="ECO:0000314"/>
    <property type="project" value="SGD"/>
</dbReference>
<dbReference type="GO" id="GO:0005829">
    <property type="term" value="C:cytosol"/>
    <property type="evidence" value="ECO:0007005"/>
    <property type="project" value="SGD"/>
</dbReference>
<dbReference type="GO" id="GO:0010008">
    <property type="term" value="C:endosome membrane"/>
    <property type="evidence" value="ECO:0000303"/>
    <property type="project" value="ComplexPortal"/>
</dbReference>
<dbReference type="GO" id="GO:0000329">
    <property type="term" value="C:fungal-type vacuole membrane"/>
    <property type="evidence" value="ECO:0007005"/>
    <property type="project" value="SGD"/>
</dbReference>
<dbReference type="GO" id="GO:0000139">
    <property type="term" value="C:Golgi membrane"/>
    <property type="evidence" value="ECO:0000303"/>
    <property type="project" value="ComplexPortal"/>
</dbReference>
<dbReference type="GO" id="GO:0000407">
    <property type="term" value="C:phagophore assembly site"/>
    <property type="evidence" value="ECO:0000318"/>
    <property type="project" value="GO_Central"/>
</dbReference>
<dbReference type="GO" id="GO:0034045">
    <property type="term" value="C:phagophore assembly site membrane"/>
    <property type="evidence" value="ECO:0000303"/>
    <property type="project" value="ComplexPortal"/>
</dbReference>
<dbReference type="GO" id="GO:0034271">
    <property type="term" value="C:phosphatidylinositol 3-kinase complex, class III, type I"/>
    <property type="evidence" value="ECO:0000314"/>
    <property type="project" value="SGD"/>
</dbReference>
<dbReference type="GO" id="GO:0034272">
    <property type="term" value="C:phosphatidylinositol 3-kinase complex, class III, type II"/>
    <property type="evidence" value="ECO:0000314"/>
    <property type="project" value="SGD"/>
</dbReference>
<dbReference type="GO" id="GO:0120095">
    <property type="term" value="C:vacuole-isolation membrane contact site"/>
    <property type="evidence" value="ECO:0000314"/>
    <property type="project" value="SGD"/>
</dbReference>
<dbReference type="GO" id="GO:0043548">
    <property type="term" value="F:phosphatidylinositol 3-kinase binding"/>
    <property type="evidence" value="ECO:0000318"/>
    <property type="project" value="GO_Central"/>
</dbReference>
<dbReference type="GO" id="GO:0030674">
    <property type="term" value="F:protein-macromolecule adaptor activity"/>
    <property type="evidence" value="ECO:0000318"/>
    <property type="project" value="GO_Central"/>
</dbReference>
<dbReference type="GO" id="GO:0000045">
    <property type="term" value="P:autophagosome assembly"/>
    <property type="evidence" value="ECO:0000316"/>
    <property type="project" value="ParkinsonsUK-UCL"/>
</dbReference>
<dbReference type="GO" id="GO:0006914">
    <property type="term" value="P:autophagy"/>
    <property type="evidence" value="ECO:0000314"/>
    <property type="project" value="ComplexPortal"/>
</dbReference>
<dbReference type="GO" id="GO:0006995">
    <property type="term" value="P:cellular response to nitrogen starvation"/>
    <property type="evidence" value="ECO:0000318"/>
    <property type="project" value="GO_Central"/>
</dbReference>
<dbReference type="GO" id="GO:0051365">
    <property type="term" value="P:cellular response to potassium ion starvation"/>
    <property type="evidence" value="ECO:0000315"/>
    <property type="project" value="SGD"/>
</dbReference>
<dbReference type="GO" id="GO:0032258">
    <property type="term" value="P:cytoplasm to vacuole targeting by the Cvt pathway"/>
    <property type="evidence" value="ECO:0000315"/>
    <property type="project" value="ParkinsonsUK-UCL"/>
</dbReference>
<dbReference type="GO" id="GO:0045324">
    <property type="term" value="P:late endosome to vacuole transport"/>
    <property type="evidence" value="ECO:0000315"/>
    <property type="project" value="SGD"/>
</dbReference>
<dbReference type="GO" id="GO:0016236">
    <property type="term" value="P:macroautophagy"/>
    <property type="evidence" value="ECO:0000315"/>
    <property type="project" value="ParkinsonsUK-UCL"/>
</dbReference>
<dbReference type="GO" id="GO:0000423">
    <property type="term" value="P:mitophagy"/>
    <property type="evidence" value="ECO:0000318"/>
    <property type="project" value="GO_Central"/>
</dbReference>
<dbReference type="GO" id="GO:0000425">
    <property type="term" value="P:pexophagy"/>
    <property type="evidence" value="ECO:0000315"/>
    <property type="project" value="SGD"/>
</dbReference>
<dbReference type="GO" id="GO:0006661">
    <property type="term" value="P:phosphatidylinositol biosynthetic process"/>
    <property type="evidence" value="ECO:0000315"/>
    <property type="project" value="SGD"/>
</dbReference>
<dbReference type="GO" id="GO:0046854">
    <property type="term" value="P:phosphatidylinositol phosphate biosynthetic process"/>
    <property type="evidence" value="ECO:0000314"/>
    <property type="project" value="ComplexPortal"/>
</dbReference>
<dbReference type="GO" id="GO:0034727">
    <property type="term" value="P:piecemeal microautophagy of the nucleus"/>
    <property type="evidence" value="ECO:0000315"/>
    <property type="project" value="SGD"/>
</dbReference>
<dbReference type="GO" id="GO:0006623">
    <property type="term" value="P:protein targeting to vacuole"/>
    <property type="evidence" value="ECO:0000314"/>
    <property type="project" value="UniProtKB"/>
</dbReference>
<dbReference type="GO" id="GO:0042147">
    <property type="term" value="P:retrograde transport, endosome to Golgi"/>
    <property type="evidence" value="ECO:0000315"/>
    <property type="project" value="SGD"/>
</dbReference>
<dbReference type="FunFam" id="1.10.418.40:FF:000008">
    <property type="entry name" value="Vacuolar sorting protein"/>
    <property type="match status" value="1"/>
</dbReference>
<dbReference type="Gene3D" id="6.10.250.3110">
    <property type="match status" value="1"/>
</dbReference>
<dbReference type="Gene3D" id="1.10.418.40">
    <property type="entry name" value="Autophagy protein 6/Beclin 1"/>
    <property type="match status" value="1"/>
</dbReference>
<dbReference type="InterPro" id="IPR007243">
    <property type="entry name" value="Atg6/Beclin"/>
</dbReference>
<dbReference type="InterPro" id="IPR038274">
    <property type="entry name" value="Atg6/Beclin_C_sf"/>
</dbReference>
<dbReference type="InterPro" id="IPR041691">
    <property type="entry name" value="Atg6/beclin_CC"/>
</dbReference>
<dbReference type="InterPro" id="IPR040455">
    <property type="entry name" value="Atg6_BARA"/>
</dbReference>
<dbReference type="PANTHER" id="PTHR12768">
    <property type="entry name" value="BECLIN 1"/>
    <property type="match status" value="1"/>
</dbReference>
<dbReference type="PANTHER" id="PTHR12768:SF4">
    <property type="entry name" value="BECLIN-1"/>
    <property type="match status" value="1"/>
</dbReference>
<dbReference type="Pfam" id="PF04111">
    <property type="entry name" value="APG6"/>
    <property type="match status" value="1"/>
</dbReference>
<dbReference type="Pfam" id="PF17675">
    <property type="entry name" value="APG6_N"/>
    <property type="match status" value="1"/>
</dbReference>